<name>DTX1_ARATH</name>
<organism>
    <name type="scientific">Arabidopsis thaliana</name>
    <name type="common">Mouse-ear cress</name>
    <dbReference type="NCBI Taxonomy" id="3702"/>
    <lineage>
        <taxon>Eukaryota</taxon>
        <taxon>Viridiplantae</taxon>
        <taxon>Streptophyta</taxon>
        <taxon>Embryophyta</taxon>
        <taxon>Tracheophyta</taxon>
        <taxon>Spermatophyta</taxon>
        <taxon>Magnoliopsida</taxon>
        <taxon>eudicotyledons</taxon>
        <taxon>Gunneridae</taxon>
        <taxon>Pentapetalae</taxon>
        <taxon>rosids</taxon>
        <taxon>malvids</taxon>
        <taxon>Brassicales</taxon>
        <taxon>Brassicaceae</taxon>
        <taxon>Camelineae</taxon>
        <taxon>Arabidopsis</taxon>
    </lineage>
</organism>
<proteinExistence type="evidence at transcript level"/>
<reference key="1">
    <citation type="journal article" date="1999" name="Nature">
        <title>Sequence and analysis of chromosome 2 of the plant Arabidopsis thaliana.</title>
        <authorList>
            <person name="Lin X."/>
            <person name="Kaul S."/>
            <person name="Rounsley S.D."/>
            <person name="Shea T.P."/>
            <person name="Benito M.-I."/>
            <person name="Town C.D."/>
            <person name="Fujii C.Y."/>
            <person name="Mason T.M."/>
            <person name="Bowman C.L."/>
            <person name="Barnstead M.E."/>
            <person name="Feldblyum T.V."/>
            <person name="Buell C.R."/>
            <person name="Ketchum K.A."/>
            <person name="Lee J.J."/>
            <person name="Ronning C.M."/>
            <person name="Koo H.L."/>
            <person name="Moffat K.S."/>
            <person name="Cronin L.A."/>
            <person name="Shen M."/>
            <person name="Pai G."/>
            <person name="Van Aken S."/>
            <person name="Umayam L."/>
            <person name="Tallon L.J."/>
            <person name="Gill J.E."/>
            <person name="Adams M.D."/>
            <person name="Carrera A.J."/>
            <person name="Creasy T.H."/>
            <person name="Goodman H.M."/>
            <person name="Somerville C.R."/>
            <person name="Copenhaver G.P."/>
            <person name="Preuss D."/>
            <person name="Nierman W.C."/>
            <person name="White O."/>
            <person name="Eisen J.A."/>
            <person name="Salzberg S.L."/>
            <person name="Fraser C.M."/>
            <person name="Venter J.C."/>
        </authorList>
    </citation>
    <scope>NUCLEOTIDE SEQUENCE [LARGE SCALE GENOMIC DNA]</scope>
    <source>
        <strain>cv. Columbia</strain>
    </source>
</reference>
<reference key="2">
    <citation type="journal article" date="2017" name="Plant J.">
        <title>Araport11: a complete reannotation of the Arabidopsis thaliana reference genome.</title>
        <authorList>
            <person name="Cheng C.Y."/>
            <person name="Krishnakumar V."/>
            <person name="Chan A.P."/>
            <person name="Thibaud-Nissen F."/>
            <person name="Schobel S."/>
            <person name="Town C.D."/>
        </authorList>
    </citation>
    <scope>GENOME REANNOTATION</scope>
    <source>
        <strain>cv. Columbia</strain>
    </source>
</reference>
<reference key="3">
    <citation type="submission" date="2005-05" db="EMBL/GenBank/DDBJ databases">
        <title>Arabidopsis ORF clones.</title>
        <authorList>
            <person name="Kim C.J."/>
            <person name="Chen H."/>
            <person name="Cheuk R."/>
            <person name="Shinn P."/>
            <person name="Ecker J.R."/>
        </authorList>
    </citation>
    <scope>NUCLEOTIDE SEQUENCE [LARGE SCALE MRNA]</scope>
    <source>
        <strain>cv. Columbia</strain>
    </source>
</reference>
<reference key="4">
    <citation type="submission" date="2006-08" db="EMBL/GenBank/DDBJ databases">
        <title>Arabidopsis ORF Clones.</title>
        <authorList>
            <person name="Quinitio C."/>
            <person name="Chen H."/>
            <person name="Kim C.J."/>
            <person name="Shinn P."/>
            <person name="Ecker J.R."/>
        </authorList>
    </citation>
    <scope>NUCLEOTIDE SEQUENCE [LARGE SCALE MRNA]</scope>
    <source>
        <strain>cv. Columbia</strain>
    </source>
</reference>
<reference key="5">
    <citation type="submission" date="2006-07" db="EMBL/GenBank/DDBJ databases">
        <title>Large-scale analysis of RIKEN Arabidopsis full-length (RAFL) cDNAs.</title>
        <authorList>
            <person name="Totoki Y."/>
            <person name="Seki M."/>
            <person name="Ishida J."/>
            <person name="Nakajima M."/>
            <person name="Enju A."/>
            <person name="Kamiya A."/>
            <person name="Narusaka M."/>
            <person name="Shin-i T."/>
            <person name="Nakagawa M."/>
            <person name="Sakamoto N."/>
            <person name="Oishi K."/>
            <person name="Kohara Y."/>
            <person name="Kobayashi M."/>
            <person name="Toyoda A."/>
            <person name="Sakaki Y."/>
            <person name="Sakurai T."/>
            <person name="Iida K."/>
            <person name="Akiyama K."/>
            <person name="Satou M."/>
            <person name="Toyoda T."/>
            <person name="Konagaya A."/>
            <person name="Carninci P."/>
            <person name="Kawai J."/>
            <person name="Hayashizaki Y."/>
            <person name="Shinozaki K."/>
        </authorList>
    </citation>
    <scope>NUCLEOTIDE SEQUENCE [LARGE SCALE MRNA]</scope>
    <source>
        <strain>cv. Columbia</strain>
    </source>
</reference>
<reference key="6">
    <citation type="journal article" date="2002" name="J. Biol. Chem.">
        <title>Functional cloning and characterization of a plant efflux carrier for multidrug and heavy metal detoxification.</title>
        <authorList>
            <person name="Li L."/>
            <person name="He Z."/>
            <person name="Pandey G.K."/>
            <person name="Tsuchiya T."/>
            <person name="Luan S."/>
        </authorList>
    </citation>
    <scope>IDENTIFICATION</scope>
    <scope>FUNCTION</scope>
    <scope>GENE FAMILY</scope>
    <scope>NOMENCLATURE</scope>
    <scope>TISSUE SPECIFICITY</scope>
    <scope>SUBCELLULAR LOCATION</scope>
</reference>
<reference key="7">
    <citation type="journal article" date="2003" name="Eur. J. Biochem.">
        <title>The multidrug/oligosaccharidyl-lipid/polysaccharide (MOP) exporter superfamily.</title>
        <authorList>
            <person name="Hvorup R.N."/>
            <person name="Winnen B."/>
            <person name="Chang A.B."/>
            <person name="Jiang Y."/>
            <person name="Zhou X.F."/>
            <person name="Saier M.H. Jr."/>
        </authorList>
    </citation>
    <scope>GENE FAMILY</scope>
</reference>
<feature type="chain" id="PRO_0000405319" description="Protein DETOXIFICATION 1">
    <location>
        <begin position="1"/>
        <end position="476"/>
    </location>
</feature>
<feature type="transmembrane region" description="Helical" evidence="1">
    <location>
        <begin position="35"/>
        <end position="55"/>
    </location>
</feature>
<feature type="transmembrane region" description="Helical" evidence="1">
    <location>
        <begin position="66"/>
        <end position="86"/>
    </location>
</feature>
<feature type="transmembrane region" description="Helical" evidence="1">
    <location>
        <begin position="117"/>
        <end position="137"/>
    </location>
</feature>
<feature type="transmembrane region" description="Helical" evidence="1">
    <location>
        <begin position="146"/>
        <end position="166"/>
    </location>
</feature>
<feature type="transmembrane region" description="Helical" evidence="1">
    <location>
        <begin position="184"/>
        <end position="204"/>
    </location>
</feature>
<feature type="transmembrane region" description="Helical" evidence="1">
    <location>
        <begin position="208"/>
        <end position="228"/>
    </location>
</feature>
<feature type="transmembrane region" description="Helical" evidence="1">
    <location>
        <begin position="260"/>
        <end position="280"/>
    </location>
</feature>
<feature type="transmembrane region" description="Helical" evidence="1">
    <location>
        <begin position="289"/>
        <end position="309"/>
    </location>
</feature>
<feature type="transmembrane region" description="Helical" evidence="1">
    <location>
        <begin position="331"/>
        <end position="351"/>
    </location>
</feature>
<feature type="transmembrane region" description="Helical" evidence="1">
    <location>
        <begin position="370"/>
        <end position="390"/>
    </location>
</feature>
<feature type="transmembrane region" description="Helical" evidence="1">
    <location>
        <begin position="402"/>
        <end position="422"/>
    </location>
</feature>
<feature type="transmembrane region" description="Helical" evidence="1">
    <location>
        <begin position="433"/>
        <end position="453"/>
    </location>
</feature>
<evidence type="ECO:0000255" key="1"/>
<evidence type="ECO:0000269" key="2">
    <source>
    </source>
</evidence>
<evidence type="ECO:0000303" key="3">
    <source>
    </source>
</evidence>
<evidence type="ECO:0000305" key="4"/>
<evidence type="ECO:0000312" key="5">
    <source>
        <dbReference type="Araport" id="AT2G04040"/>
    </source>
</evidence>
<evidence type="ECO:0000312" key="6">
    <source>
        <dbReference type="EMBL" id="AAD28687.1"/>
    </source>
</evidence>
<sequence length="476" mass="51845">MEEPFLLRDELLVPSQVTWHTNPLTVELKRVSRLAAPMATVTIAQYLLPVISVMVAGHNGELQLSGVALANSFTNVTGFSIMCGLVGALETLCGQAYGAKQYEKIGTYAYSAIASNIPICFLISILWLYIEKILISLGQDPEISRIAGSYAFWLIPALFGQAIVIPLSRFLLTQGLVIPLLFTAVTTLLFHVLVCWTLVFLFGLGCNGPAMATSVSFWFYAVILSCYVRFSSSCEKTRGFVSRDFVSSIKQFFQYGIPSAAMICLEWWLFEILILCSGLLPNPKLETSVLSICLTIETLHYVISAGVAAAVSTRVSNNLGAGNPQVARVSVLAGLCLWIVESAFFSILLFTCRNIIGYAFSNSKEVLDYVADLTPLLCLSFILDGFTAVLNGVARGSGWQHIGAWNNTVSYYLVGAPVGIYLAFSRELNGKGLWCGVVVGSTVQATILAIVTASINWKEQAEKARKRIVSTENRLA</sequence>
<keyword id="KW-1003">Cell membrane</keyword>
<keyword id="KW-0472">Membrane</keyword>
<keyword id="KW-1185">Reference proteome</keyword>
<keyword id="KW-0812">Transmembrane</keyword>
<keyword id="KW-1133">Transmembrane helix</keyword>
<keyword id="KW-0813">Transport</keyword>
<accession>Q9SIA5</accession>
<protein>
    <recommendedName>
        <fullName evidence="3">Protein DETOXIFICATION 1</fullName>
        <shortName evidence="3">AtDTX1</shortName>
    </recommendedName>
    <alternativeName>
        <fullName evidence="4">Multidrug and toxic compound extrusion protein 1</fullName>
        <shortName evidence="4">MATE protein 1</shortName>
    </alternativeName>
</protein>
<dbReference type="EMBL" id="AC007178">
    <property type="protein sequence ID" value="AAD28687.1"/>
    <property type="molecule type" value="Genomic_DNA"/>
</dbReference>
<dbReference type="EMBL" id="CP002685">
    <property type="protein sequence ID" value="AEC05791.1"/>
    <property type="molecule type" value="Genomic_DNA"/>
</dbReference>
<dbReference type="EMBL" id="BT022022">
    <property type="protein sequence ID" value="AAY25434.1"/>
    <property type="molecule type" value="mRNA"/>
</dbReference>
<dbReference type="EMBL" id="BT026371">
    <property type="protein sequence ID" value="ABH04478.1"/>
    <property type="molecule type" value="mRNA"/>
</dbReference>
<dbReference type="EMBL" id="AK227153">
    <property type="protein sequence ID" value="BAE99196.1"/>
    <property type="molecule type" value="mRNA"/>
</dbReference>
<dbReference type="PIR" id="A84454">
    <property type="entry name" value="A84454"/>
</dbReference>
<dbReference type="RefSeq" id="NP_178491.1">
    <property type="nucleotide sequence ID" value="NM_126443.5"/>
</dbReference>
<dbReference type="SMR" id="Q9SIA5"/>
<dbReference type="BioGRID" id="339">
    <property type="interactions" value="37"/>
</dbReference>
<dbReference type="FunCoup" id="Q9SIA5">
    <property type="interactions" value="277"/>
</dbReference>
<dbReference type="IntAct" id="Q9SIA5">
    <property type="interactions" value="37"/>
</dbReference>
<dbReference type="STRING" id="3702.Q9SIA5"/>
<dbReference type="TCDB" id="2.A.66.1.8">
    <property type="family name" value="the multidrug/oligosaccharidyl-lipid/polysaccharide (mop) flippase superfamily"/>
</dbReference>
<dbReference type="PaxDb" id="3702-AT2G04040.1"/>
<dbReference type="ProteomicsDB" id="221824"/>
<dbReference type="EnsemblPlants" id="AT2G04040.1">
    <property type="protein sequence ID" value="AT2G04040.1"/>
    <property type="gene ID" value="AT2G04040"/>
</dbReference>
<dbReference type="GeneID" id="814938"/>
<dbReference type="Gramene" id="AT2G04040.1">
    <property type="protein sequence ID" value="AT2G04040.1"/>
    <property type="gene ID" value="AT2G04040"/>
</dbReference>
<dbReference type="KEGG" id="ath:AT2G04040"/>
<dbReference type="Araport" id="AT2G04040"/>
<dbReference type="TAIR" id="AT2G04040">
    <property type="gene designation" value="DTX1"/>
</dbReference>
<dbReference type="eggNOG" id="KOG1347">
    <property type="taxonomic scope" value="Eukaryota"/>
</dbReference>
<dbReference type="HOGENOM" id="CLU_012893_1_0_1"/>
<dbReference type="InParanoid" id="Q9SIA5"/>
<dbReference type="OMA" id="WIVESAF"/>
<dbReference type="OrthoDB" id="2126698at2759"/>
<dbReference type="PhylomeDB" id="Q9SIA5"/>
<dbReference type="PRO" id="PR:Q9SIA5"/>
<dbReference type="Proteomes" id="UP000006548">
    <property type="component" value="Chromosome 2"/>
</dbReference>
<dbReference type="ExpressionAtlas" id="Q9SIA5">
    <property type="expression patterns" value="baseline and differential"/>
</dbReference>
<dbReference type="GO" id="GO:0005886">
    <property type="term" value="C:plasma membrane"/>
    <property type="evidence" value="ECO:0000314"/>
    <property type="project" value="TAIR"/>
</dbReference>
<dbReference type="GO" id="GO:0015297">
    <property type="term" value="F:antiporter activity"/>
    <property type="evidence" value="ECO:0007669"/>
    <property type="project" value="InterPro"/>
</dbReference>
<dbReference type="GO" id="GO:0015562">
    <property type="term" value="F:efflux transmembrane transporter activity"/>
    <property type="evidence" value="ECO:0000314"/>
    <property type="project" value="TAIR"/>
</dbReference>
<dbReference type="GO" id="GO:0042910">
    <property type="term" value="F:xenobiotic transmembrane transporter activity"/>
    <property type="evidence" value="ECO:0007669"/>
    <property type="project" value="InterPro"/>
</dbReference>
<dbReference type="GO" id="GO:0015691">
    <property type="term" value="P:cadmium ion transport"/>
    <property type="evidence" value="ECO:0000314"/>
    <property type="project" value="TAIR"/>
</dbReference>
<dbReference type="GO" id="GO:1990961">
    <property type="term" value="P:xenobiotic detoxification by transmembrane export across the plasma membrane"/>
    <property type="evidence" value="ECO:0007669"/>
    <property type="project" value="InterPro"/>
</dbReference>
<dbReference type="CDD" id="cd13132">
    <property type="entry name" value="MATE_eukaryotic"/>
    <property type="match status" value="1"/>
</dbReference>
<dbReference type="InterPro" id="IPR045069">
    <property type="entry name" value="MATE_euk"/>
</dbReference>
<dbReference type="InterPro" id="IPR002528">
    <property type="entry name" value="MATE_fam"/>
</dbReference>
<dbReference type="NCBIfam" id="TIGR00797">
    <property type="entry name" value="matE"/>
    <property type="match status" value="1"/>
</dbReference>
<dbReference type="PANTHER" id="PTHR11206">
    <property type="entry name" value="MULTIDRUG RESISTANCE PROTEIN"/>
    <property type="match status" value="1"/>
</dbReference>
<dbReference type="Pfam" id="PF01554">
    <property type="entry name" value="MatE"/>
    <property type="match status" value="2"/>
</dbReference>
<comment type="function">
    <text evidence="2">Efflux carrier for plant-derived alkaloids, antibiotics, heavy metal and other toxic compounds. Involved in cadmium detoxification. Requires probably a proton-motive force for the efflux.</text>
</comment>
<comment type="subcellular location">
    <subcellularLocation>
        <location evidence="2">Cell membrane</location>
        <topology evidence="2">Multi-pass membrane protein</topology>
    </subcellularLocation>
</comment>
<comment type="tissue specificity">
    <text evidence="2">Ubiquitous. Highest expression in flowers and stems.</text>
</comment>
<comment type="similarity">
    <text evidence="4">Belongs to the multi antimicrobial extrusion (MATE) (TC 2.A.66.1) family.</text>
</comment>
<comment type="caution">
    <text evidence="4">Mistakenly referred to as AT2G04070 in PubMed:11739388.</text>
</comment>
<gene>
    <name evidence="3" type="primary">DTX1</name>
    <name type="synonym">TX1</name>
    <name evidence="5" type="ordered locus">At2g04040</name>
    <name evidence="6" type="ORF">F3L12.13</name>
</gene>